<name>PNP_PSEA8</name>
<organism>
    <name type="scientific">Pseudomonas aeruginosa (strain LESB58)</name>
    <dbReference type="NCBI Taxonomy" id="557722"/>
    <lineage>
        <taxon>Bacteria</taxon>
        <taxon>Pseudomonadati</taxon>
        <taxon>Pseudomonadota</taxon>
        <taxon>Gammaproteobacteria</taxon>
        <taxon>Pseudomonadales</taxon>
        <taxon>Pseudomonadaceae</taxon>
        <taxon>Pseudomonas</taxon>
    </lineage>
</organism>
<comment type="function">
    <text evidence="1">Involved in mRNA degradation. Catalyzes the phosphorolysis of single-stranded polyribonucleotides processively in the 3'- to 5'-direction.</text>
</comment>
<comment type="catalytic activity">
    <reaction evidence="1">
        <text>RNA(n+1) + phosphate = RNA(n) + a ribonucleoside 5'-diphosphate</text>
        <dbReference type="Rhea" id="RHEA:22096"/>
        <dbReference type="Rhea" id="RHEA-COMP:14527"/>
        <dbReference type="Rhea" id="RHEA-COMP:17342"/>
        <dbReference type="ChEBI" id="CHEBI:43474"/>
        <dbReference type="ChEBI" id="CHEBI:57930"/>
        <dbReference type="ChEBI" id="CHEBI:140395"/>
        <dbReference type="EC" id="2.7.7.8"/>
    </reaction>
</comment>
<comment type="cofactor">
    <cofactor evidence="1">
        <name>Mg(2+)</name>
        <dbReference type="ChEBI" id="CHEBI:18420"/>
    </cofactor>
</comment>
<comment type="subunit">
    <text evidence="1">Component of the RNA degradosome, which is a multiprotein complex involved in RNA processing and mRNA degradation.</text>
</comment>
<comment type="subcellular location">
    <subcellularLocation>
        <location evidence="1">Cytoplasm</location>
    </subcellularLocation>
</comment>
<comment type="similarity">
    <text evidence="1">Belongs to the polyribonucleotide nucleotidyltransferase family.</text>
</comment>
<dbReference type="EC" id="2.7.7.8" evidence="1"/>
<dbReference type="EMBL" id="FM209186">
    <property type="protein sequence ID" value="CAW29879.1"/>
    <property type="molecule type" value="Genomic_DNA"/>
</dbReference>
<dbReference type="RefSeq" id="WP_003095181.1">
    <property type="nucleotide sequence ID" value="NC_011770.1"/>
</dbReference>
<dbReference type="SMR" id="B7V1F2"/>
<dbReference type="KEGG" id="pag:PLES_51251"/>
<dbReference type="HOGENOM" id="CLU_004217_2_2_6"/>
<dbReference type="GO" id="GO:0005829">
    <property type="term" value="C:cytosol"/>
    <property type="evidence" value="ECO:0007669"/>
    <property type="project" value="TreeGrafter"/>
</dbReference>
<dbReference type="GO" id="GO:0000175">
    <property type="term" value="F:3'-5'-RNA exonuclease activity"/>
    <property type="evidence" value="ECO:0007669"/>
    <property type="project" value="TreeGrafter"/>
</dbReference>
<dbReference type="GO" id="GO:0000287">
    <property type="term" value="F:magnesium ion binding"/>
    <property type="evidence" value="ECO:0007669"/>
    <property type="project" value="UniProtKB-UniRule"/>
</dbReference>
<dbReference type="GO" id="GO:0004654">
    <property type="term" value="F:polyribonucleotide nucleotidyltransferase activity"/>
    <property type="evidence" value="ECO:0007669"/>
    <property type="project" value="UniProtKB-UniRule"/>
</dbReference>
<dbReference type="GO" id="GO:0003723">
    <property type="term" value="F:RNA binding"/>
    <property type="evidence" value="ECO:0007669"/>
    <property type="project" value="UniProtKB-UniRule"/>
</dbReference>
<dbReference type="GO" id="GO:0006402">
    <property type="term" value="P:mRNA catabolic process"/>
    <property type="evidence" value="ECO:0007669"/>
    <property type="project" value="UniProtKB-UniRule"/>
</dbReference>
<dbReference type="GO" id="GO:0006396">
    <property type="term" value="P:RNA processing"/>
    <property type="evidence" value="ECO:0007669"/>
    <property type="project" value="InterPro"/>
</dbReference>
<dbReference type="CDD" id="cd02393">
    <property type="entry name" value="KH-I_PNPase"/>
    <property type="match status" value="1"/>
</dbReference>
<dbReference type="CDD" id="cd11363">
    <property type="entry name" value="RNase_PH_PNPase_1"/>
    <property type="match status" value="1"/>
</dbReference>
<dbReference type="CDD" id="cd11364">
    <property type="entry name" value="RNase_PH_PNPase_2"/>
    <property type="match status" value="1"/>
</dbReference>
<dbReference type="CDD" id="cd04472">
    <property type="entry name" value="S1_PNPase"/>
    <property type="match status" value="1"/>
</dbReference>
<dbReference type="FunFam" id="2.40.50.140:FF:000023">
    <property type="entry name" value="Polyribonucleotide nucleotidyltransferase"/>
    <property type="match status" value="1"/>
</dbReference>
<dbReference type="FunFam" id="3.30.1370.10:FF:000001">
    <property type="entry name" value="Polyribonucleotide nucleotidyltransferase"/>
    <property type="match status" value="1"/>
</dbReference>
<dbReference type="FunFam" id="3.30.230.70:FF:000001">
    <property type="entry name" value="Polyribonucleotide nucleotidyltransferase"/>
    <property type="match status" value="1"/>
</dbReference>
<dbReference type="FunFam" id="3.30.230.70:FF:000002">
    <property type="entry name" value="Polyribonucleotide nucleotidyltransferase"/>
    <property type="match status" value="1"/>
</dbReference>
<dbReference type="Gene3D" id="3.30.230.70">
    <property type="entry name" value="GHMP Kinase, N-terminal domain"/>
    <property type="match status" value="2"/>
</dbReference>
<dbReference type="Gene3D" id="3.30.1370.10">
    <property type="entry name" value="K Homology domain, type 1"/>
    <property type="match status" value="1"/>
</dbReference>
<dbReference type="Gene3D" id="2.40.50.140">
    <property type="entry name" value="Nucleic acid-binding proteins"/>
    <property type="match status" value="1"/>
</dbReference>
<dbReference type="HAMAP" id="MF_01595">
    <property type="entry name" value="PNPase"/>
    <property type="match status" value="1"/>
</dbReference>
<dbReference type="InterPro" id="IPR001247">
    <property type="entry name" value="ExoRNase_PH_dom1"/>
</dbReference>
<dbReference type="InterPro" id="IPR015847">
    <property type="entry name" value="ExoRNase_PH_dom2"/>
</dbReference>
<dbReference type="InterPro" id="IPR036345">
    <property type="entry name" value="ExoRNase_PH_dom2_sf"/>
</dbReference>
<dbReference type="InterPro" id="IPR004087">
    <property type="entry name" value="KH_dom"/>
</dbReference>
<dbReference type="InterPro" id="IPR004088">
    <property type="entry name" value="KH_dom_type_1"/>
</dbReference>
<dbReference type="InterPro" id="IPR036612">
    <property type="entry name" value="KH_dom_type_1_sf"/>
</dbReference>
<dbReference type="InterPro" id="IPR012340">
    <property type="entry name" value="NA-bd_OB-fold"/>
</dbReference>
<dbReference type="InterPro" id="IPR012162">
    <property type="entry name" value="PNPase"/>
</dbReference>
<dbReference type="InterPro" id="IPR027408">
    <property type="entry name" value="PNPase/RNase_PH_dom_sf"/>
</dbReference>
<dbReference type="InterPro" id="IPR015848">
    <property type="entry name" value="PNPase_PH_RNA-bd_bac/org-type"/>
</dbReference>
<dbReference type="InterPro" id="IPR020568">
    <property type="entry name" value="Ribosomal_Su5_D2-typ_SF"/>
</dbReference>
<dbReference type="InterPro" id="IPR003029">
    <property type="entry name" value="S1_domain"/>
</dbReference>
<dbReference type="NCBIfam" id="TIGR03591">
    <property type="entry name" value="polynuc_phos"/>
    <property type="match status" value="1"/>
</dbReference>
<dbReference type="NCBIfam" id="NF008805">
    <property type="entry name" value="PRK11824.1"/>
    <property type="match status" value="1"/>
</dbReference>
<dbReference type="PANTHER" id="PTHR11252">
    <property type="entry name" value="POLYRIBONUCLEOTIDE NUCLEOTIDYLTRANSFERASE"/>
    <property type="match status" value="1"/>
</dbReference>
<dbReference type="PANTHER" id="PTHR11252:SF0">
    <property type="entry name" value="POLYRIBONUCLEOTIDE NUCLEOTIDYLTRANSFERASE 1, MITOCHONDRIAL"/>
    <property type="match status" value="1"/>
</dbReference>
<dbReference type="Pfam" id="PF00013">
    <property type="entry name" value="KH_1"/>
    <property type="match status" value="1"/>
</dbReference>
<dbReference type="Pfam" id="PF03726">
    <property type="entry name" value="PNPase"/>
    <property type="match status" value="1"/>
</dbReference>
<dbReference type="Pfam" id="PF01138">
    <property type="entry name" value="RNase_PH"/>
    <property type="match status" value="2"/>
</dbReference>
<dbReference type="Pfam" id="PF03725">
    <property type="entry name" value="RNase_PH_C"/>
    <property type="match status" value="2"/>
</dbReference>
<dbReference type="Pfam" id="PF00575">
    <property type="entry name" value="S1"/>
    <property type="match status" value="1"/>
</dbReference>
<dbReference type="PIRSF" id="PIRSF005499">
    <property type="entry name" value="PNPase"/>
    <property type="match status" value="1"/>
</dbReference>
<dbReference type="SMART" id="SM00322">
    <property type="entry name" value="KH"/>
    <property type="match status" value="1"/>
</dbReference>
<dbReference type="SMART" id="SM00316">
    <property type="entry name" value="S1"/>
    <property type="match status" value="1"/>
</dbReference>
<dbReference type="SUPFAM" id="SSF54791">
    <property type="entry name" value="Eukaryotic type KH-domain (KH-domain type I)"/>
    <property type="match status" value="1"/>
</dbReference>
<dbReference type="SUPFAM" id="SSF50249">
    <property type="entry name" value="Nucleic acid-binding proteins"/>
    <property type="match status" value="1"/>
</dbReference>
<dbReference type="SUPFAM" id="SSF55666">
    <property type="entry name" value="Ribonuclease PH domain 2-like"/>
    <property type="match status" value="2"/>
</dbReference>
<dbReference type="SUPFAM" id="SSF54211">
    <property type="entry name" value="Ribosomal protein S5 domain 2-like"/>
    <property type="match status" value="2"/>
</dbReference>
<dbReference type="PROSITE" id="PS50084">
    <property type="entry name" value="KH_TYPE_1"/>
    <property type="match status" value="1"/>
</dbReference>
<dbReference type="PROSITE" id="PS50126">
    <property type="entry name" value="S1"/>
    <property type="match status" value="1"/>
</dbReference>
<protein>
    <recommendedName>
        <fullName evidence="1">Polyribonucleotide nucleotidyltransferase</fullName>
        <ecNumber evidence="1">2.7.7.8</ecNumber>
    </recommendedName>
    <alternativeName>
        <fullName evidence="1">Polynucleotide phosphorylase</fullName>
        <shortName evidence="1">PNPase</shortName>
    </alternativeName>
</protein>
<sequence length="701" mass="75453">MNPVTKQFQFGQSTVTLETGRIARQATGAVLVTMDDVSVLVTVVGAKSPAEGRDFFPLSVHYQEKTYAAGRIPGGFFKREGRPSEKETLTSRLIDRPIRPLFPEGFMNEVQVVCTVVSTNKKSDPDIAAMIGTSAALAISGIPFAGPIGAARVGFHPEIGYILNPTYEQLQSSSLDMVVAGTEDAVLMVESEADELTEDQMLGAVLFAHDEFQAVIRAVKELAAEAGKPAWDWKAPAENTVLVNAIKAELGEAISQAYTITIKQDRYNRLGELRDQAVALFAGEEEGKFPASEVKDVFGLLEYRTVRENIVNGKPRIDGRDTRTVRPLRIEVGVLGKTHGSALFTRGETQALVVATLGTARDAQLLDTLEGERKDAFMLHYNFPPFSVGECGRMGSPGRREIGHGRLARRGVAAMLPTQDEFPYTIRVVSEITESNGSSSMASVCGASLALMDAGVPVKAPVAGIAMGLVKEGEKFAVLTDILGDEDHLGDMDFKVAGTDKGVTALQMDIKINGITEEIMEIALGQALEARLNILGQMNQVIAKPRAELSENAPTMLQMKIDSDKIRDVIGKGGATIRGICEETKASIDIEDDGSVKIYGETKEAAEAAKLRVLAITAEAEIGKIYVGKVERIVDFGAFVNILPGKDGLVHISQISDKRIDKVTDVLQEGQEVKVLVLDVDNRGRIKLSIKDVAAAEASGV</sequence>
<evidence type="ECO:0000255" key="1">
    <source>
        <dbReference type="HAMAP-Rule" id="MF_01595"/>
    </source>
</evidence>
<proteinExistence type="inferred from homology"/>
<gene>
    <name evidence="1" type="primary">pnp</name>
    <name type="ordered locus">PLES_51251</name>
</gene>
<accession>B7V1F2</accession>
<reference key="1">
    <citation type="journal article" date="2009" name="Genome Res.">
        <title>Newly introduced genomic prophage islands are critical determinants of in vivo competitiveness in the Liverpool epidemic strain of Pseudomonas aeruginosa.</title>
        <authorList>
            <person name="Winstanley C."/>
            <person name="Langille M.G.I."/>
            <person name="Fothergill J.L."/>
            <person name="Kukavica-Ibrulj I."/>
            <person name="Paradis-Bleau C."/>
            <person name="Sanschagrin F."/>
            <person name="Thomson N.R."/>
            <person name="Winsor G.L."/>
            <person name="Quail M.A."/>
            <person name="Lennard N."/>
            <person name="Bignell A."/>
            <person name="Clarke L."/>
            <person name="Seeger K."/>
            <person name="Saunders D."/>
            <person name="Harris D."/>
            <person name="Parkhill J."/>
            <person name="Hancock R.E.W."/>
            <person name="Brinkman F.S.L."/>
            <person name="Levesque R.C."/>
        </authorList>
    </citation>
    <scope>NUCLEOTIDE SEQUENCE [LARGE SCALE GENOMIC DNA]</scope>
    <source>
        <strain>LESB58</strain>
    </source>
</reference>
<keyword id="KW-0963">Cytoplasm</keyword>
<keyword id="KW-0460">Magnesium</keyword>
<keyword id="KW-0479">Metal-binding</keyword>
<keyword id="KW-0548">Nucleotidyltransferase</keyword>
<keyword id="KW-0694">RNA-binding</keyword>
<keyword id="KW-0808">Transferase</keyword>
<feature type="chain" id="PRO_1000147946" description="Polyribonucleotide nucleotidyltransferase">
    <location>
        <begin position="1"/>
        <end position="701"/>
    </location>
</feature>
<feature type="domain" description="KH" evidence="1">
    <location>
        <begin position="554"/>
        <end position="613"/>
    </location>
</feature>
<feature type="domain" description="S1 motif" evidence="1">
    <location>
        <begin position="623"/>
        <end position="691"/>
    </location>
</feature>
<feature type="binding site" evidence="1">
    <location>
        <position position="487"/>
    </location>
    <ligand>
        <name>Mg(2+)</name>
        <dbReference type="ChEBI" id="CHEBI:18420"/>
    </ligand>
</feature>
<feature type="binding site" evidence="1">
    <location>
        <position position="493"/>
    </location>
    <ligand>
        <name>Mg(2+)</name>
        <dbReference type="ChEBI" id="CHEBI:18420"/>
    </ligand>
</feature>